<dbReference type="EMBL" id="AL935263">
    <property type="protein sequence ID" value="CCC79421.1"/>
    <property type="molecule type" value="Genomic_DNA"/>
</dbReference>
<dbReference type="RefSeq" id="WP_003644614.1">
    <property type="nucleotide sequence ID" value="NC_004567.2"/>
</dbReference>
<dbReference type="RefSeq" id="YP_004889935.1">
    <property type="nucleotide sequence ID" value="NC_004567.2"/>
</dbReference>
<dbReference type="SMR" id="Q88V75"/>
<dbReference type="STRING" id="220668.lp_2203"/>
<dbReference type="EnsemblBacteria" id="CCC79421">
    <property type="protein sequence ID" value="CCC79421"/>
    <property type="gene ID" value="lp_2203"/>
</dbReference>
<dbReference type="GeneID" id="89669461"/>
<dbReference type="KEGG" id="lpl:lp_2203"/>
<dbReference type="PATRIC" id="fig|220668.9.peg.1862"/>
<dbReference type="eggNOG" id="COG2001">
    <property type="taxonomic scope" value="Bacteria"/>
</dbReference>
<dbReference type="HOGENOM" id="CLU_107907_0_5_9"/>
<dbReference type="OrthoDB" id="9807753at2"/>
<dbReference type="PhylomeDB" id="Q88V75"/>
<dbReference type="Proteomes" id="UP000000432">
    <property type="component" value="Chromosome"/>
</dbReference>
<dbReference type="GO" id="GO:0005737">
    <property type="term" value="C:cytoplasm"/>
    <property type="evidence" value="ECO:0007669"/>
    <property type="project" value="UniProtKB-UniRule"/>
</dbReference>
<dbReference type="GO" id="GO:0009295">
    <property type="term" value="C:nucleoid"/>
    <property type="evidence" value="ECO:0007669"/>
    <property type="project" value="UniProtKB-SubCell"/>
</dbReference>
<dbReference type="GO" id="GO:0003700">
    <property type="term" value="F:DNA-binding transcription factor activity"/>
    <property type="evidence" value="ECO:0007669"/>
    <property type="project" value="UniProtKB-UniRule"/>
</dbReference>
<dbReference type="GO" id="GO:0000976">
    <property type="term" value="F:transcription cis-regulatory region binding"/>
    <property type="evidence" value="ECO:0007669"/>
    <property type="project" value="TreeGrafter"/>
</dbReference>
<dbReference type="GO" id="GO:2000143">
    <property type="term" value="P:negative regulation of DNA-templated transcription initiation"/>
    <property type="evidence" value="ECO:0007669"/>
    <property type="project" value="TreeGrafter"/>
</dbReference>
<dbReference type="CDD" id="cd16321">
    <property type="entry name" value="MraZ_C"/>
    <property type="match status" value="1"/>
</dbReference>
<dbReference type="CDD" id="cd16320">
    <property type="entry name" value="MraZ_N"/>
    <property type="match status" value="1"/>
</dbReference>
<dbReference type="FunFam" id="3.40.1550.20:FF:000002">
    <property type="entry name" value="Transcriptional regulator MraZ"/>
    <property type="match status" value="1"/>
</dbReference>
<dbReference type="Gene3D" id="3.40.1550.20">
    <property type="entry name" value="Transcriptional regulator MraZ domain"/>
    <property type="match status" value="1"/>
</dbReference>
<dbReference type="HAMAP" id="MF_01008">
    <property type="entry name" value="MraZ"/>
    <property type="match status" value="1"/>
</dbReference>
<dbReference type="InterPro" id="IPR003444">
    <property type="entry name" value="MraZ"/>
</dbReference>
<dbReference type="InterPro" id="IPR035644">
    <property type="entry name" value="MraZ_C"/>
</dbReference>
<dbReference type="InterPro" id="IPR020603">
    <property type="entry name" value="MraZ_dom"/>
</dbReference>
<dbReference type="InterPro" id="IPR035642">
    <property type="entry name" value="MraZ_N"/>
</dbReference>
<dbReference type="InterPro" id="IPR038619">
    <property type="entry name" value="MraZ_sf"/>
</dbReference>
<dbReference type="InterPro" id="IPR007159">
    <property type="entry name" value="SpoVT-AbrB_dom"/>
</dbReference>
<dbReference type="InterPro" id="IPR037914">
    <property type="entry name" value="SpoVT-AbrB_sf"/>
</dbReference>
<dbReference type="NCBIfam" id="TIGR00242">
    <property type="entry name" value="division/cell wall cluster transcriptional repressor MraZ"/>
    <property type="match status" value="1"/>
</dbReference>
<dbReference type="PANTHER" id="PTHR34701">
    <property type="entry name" value="TRANSCRIPTIONAL REGULATOR MRAZ"/>
    <property type="match status" value="1"/>
</dbReference>
<dbReference type="PANTHER" id="PTHR34701:SF1">
    <property type="entry name" value="TRANSCRIPTIONAL REGULATOR MRAZ"/>
    <property type="match status" value="1"/>
</dbReference>
<dbReference type="Pfam" id="PF02381">
    <property type="entry name" value="MraZ"/>
    <property type="match status" value="2"/>
</dbReference>
<dbReference type="SUPFAM" id="SSF89447">
    <property type="entry name" value="AbrB/MazE/MraZ-like"/>
    <property type="match status" value="1"/>
</dbReference>
<dbReference type="PROSITE" id="PS51740">
    <property type="entry name" value="SPOVT_ABRB"/>
    <property type="match status" value="2"/>
</dbReference>
<accession>Q88V75</accession>
<accession>F9UQD2</accession>
<name>MRAZ_LACPL</name>
<reference key="1">
    <citation type="journal article" date="2003" name="Proc. Natl. Acad. Sci. U.S.A.">
        <title>Complete genome sequence of Lactobacillus plantarum WCFS1.</title>
        <authorList>
            <person name="Kleerebezem M."/>
            <person name="Boekhorst J."/>
            <person name="van Kranenburg R."/>
            <person name="Molenaar D."/>
            <person name="Kuipers O.P."/>
            <person name="Leer R."/>
            <person name="Tarchini R."/>
            <person name="Peters S.A."/>
            <person name="Sandbrink H.M."/>
            <person name="Fiers M.W.E.J."/>
            <person name="Stiekema W."/>
            <person name="Klein Lankhorst R.M."/>
            <person name="Bron P.A."/>
            <person name="Hoffer S.M."/>
            <person name="Nierop Groot M.N."/>
            <person name="Kerkhoven R."/>
            <person name="De Vries M."/>
            <person name="Ursing B."/>
            <person name="De Vos W.M."/>
            <person name="Siezen R.J."/>
        </authorList>
    </citation>
    <scope>NUCLEOTIDE SEQUENCE [LARGE SCALE GENOMIC DNA]</scope>
    <source>
        <strain>ATCC BAA-793 / NCIMB 8826 / WCFS1</strain>
    </source>
</reference>
<reference key="2">
    <citation type="journal article" date="2012" name="J. Bacteriol.">
        <title>Complete resequencing and reannotation of the Lactobacillus plantarum WCFS1 genome.</title>
        <authorList>
            <person name="Siezen R.J."/>
            <person name="Francke C."/>
            <person name="Renckens B."/>
            <person name="Boekhorst J."/>
            <person name="Wels M."/>
            <person name="Kleerebezem M."/>
            <person name="van Hijum S.A."/>
        </authorList>
    </citation>
    <scope>NUCLEOTIDE SEQUENCE [LARGE SCALE GENOMIC DNA]</scope>
    <scope>GENOME REANNOTATION</scope>
    <source>
        <strain>ATCC BAA-793 / NCIMB 8826 / WCFS1</strain>
    </source>
</reference>
<organism>
    <name type="scientific">Lactiplantibacillus plantarum (strain ATCC BAA-793 / NCIMB 8826 / WCFS1)</name>
    <name type="common">Lactobacillus plantarum</name>
    <dbReference type="NCBI Taxonomy" id="220668"/>
    <lineage>
        <taxon>Bacteria</taxon>
        <taxon>Bacillati</taxon>
        <taxon>Bacillota</taxon>
        <taxon>Bacilli</taxon>
        <taxon>Lactobacillales</taxon>
        <taxon>Lactobacillaceae</taxon>
        <taxon>Lactiplantibacillus</taxon>
    </lineage>
</organism>
<proteinExistence type="inferred from homology"/>
<protein>
    <recommendedName>
        <fullName>Transcriptional regulator MraZ</fullName>
    </recommendedName>
</protein>
<keyword id="KW-0963">Cytoplasm</keyword>
<keyword id="KW-0238">DNA-binding</keyword>
<keyword id="KW-1185">Reference proteome</keyword>
<keyword id="KW-0677">Repeat</keyword>
<keyword id="KW-0804">Transcription</keyword>
<keyword id="KW-0805">Transcription regulation</keyword>
<feature type="chain" id="PRO_0000108490" description="Transcriptional regulator MraZ">
    <location>
        <begin position="1"/>
        <end position="141"/>
    </location>
</feature>
<feature type="domain" description="SpoVT-AbrB 1" evidence="2">
    <location>
        <begin position="5"/>
        <end position="47"/>
    </location>
</feature>
<feature type="domain" description="SpoVT-AbrB 2" evidence="2">
    <location>
        <begin position="76"/>
        <end position="119"/>
    </location>
</feature>
<sequence>MFFGEFEHALDAKGRLIIPAKFRELLGTSFVITRGMDGCIFGYPAERWATLQAQLDDLPLTRKDARAFVRFFYAAAAECELDKQGRVMIPATLRQYAKLEKQCVIVGVSDRFEIWGAEHWQQFETETAANFDDLAENLIDF</sequence>
<comment type="subunit">
    <text evidence="1">Forms oligomers.</text>
</comment>
<comment type="subcellular location">
    <subcellularLocation>
        <location evidence="1">Cytoplasm</location>
        <location evidence="1">Nucleoid</location>
    </subcellularLocation>
</comment>
<comment type="similarity">
    <text evidence="1">Belongs to the MraZ family.</text>
</comment>
<gene>
    <name evidence="1" type="primary">mraZ</name>
    <name type="ordered locus">lp_2203</name>
</gene>
<evidence type="ECO:0000255" key="1">
    <source>
        <dbReference type="HAMAP-Rule" id="MF_01008"/>
    </source>
</evidence>
<evidence type="ECO:0000255" key="2">
    <source>
        <dbReference type="PROSITE-ProRule" id="PRU01076"/>
    </source>
</evidence>